<reference key="1">
    <citation type="journal article" date="2003" name="Science">
        <title>Role of mobile DNA in the evolution of vancomycin-resistant Enterococcus faecalis.</title>
        <authorList>
            <person name="Paulsen I.T."/>
            <person name="Banerjei L."/>
            <person name="Myers G.S.A."/>
            <person name="Nelson K.E."/>
            <person name="Seshadri R."/>
            <person name="Read T.D."/>
            <person name="Fouts D.E."/>
            <person name="Eisen J.A."/>
            <person name="Gill S.R."/>
            <person name="Heidelberg J.F."/>
            <person name="Tettelin H."/>
            <person name="Dodson R.J."/>
            <person name="Umayam L.A."/>
            <person name="Brinkac L.M."/>
            <person name="Beanan M.J."/>
            <person name="Daugherty S.C."/>
            <person name="DeBoy R.T."/>
            <person name="Durkin S.A."/>
            <person name="Kolonay J.F."/>
            <person name="Madupu R."/>
            <person name="Nelson W.C."/>
            <person name="Vamathevan J.J."/>
            <person name="Tran B."/>
            <person name="Upton J."/>
            <person name="Hansen T."/>
            <person name="Shetty J."/>
            <person name="Khouri H.M."/>
            <person name="Utterback T.R."/>
            <person name="Radune D."/>
            <person name="Ketchum K.A."/>
            <person name="Dougherty B.A."/>
            <person name="Fraser C.M."/>
        </authorList>
    </citation>
    <scope>NUCLEOTIDE SEQUENCE [LARGE SCALE GENOMIC DNA]</scope>
    <source>
        <strain>ATCC 700802 / V583</strain>
    </source>
</reference>
<accession>Q837A7</accession>
<proteinExistence type="inferred from homology"/>
<comment type="function">
    <text evidence="1">Specifically dimethylates two adjacent adenosines (A1518 and A1519) in the loop of a conserved hairpin near the 3'-end of 16S rRNA in the 30S particle. May play a critical role in biogenesis of 30S subunits.</text>
</comment>
<comment type="catalytic activity">
    <reaction evidence="1">
        <text>adenosine(1518)/adenosine(1519) in 16S rRNA + 4 S-adenosyl-L-methionine = N(6)-dimethyladenosine(1518)/N(6)-dimethyladenosine(1519) in 16S rRNA + 4 S-adenosyl-L-homocysteine + 4 H(+)</text>
        <dbReference type="Rhea" id="RHEA:19609"/>
        <dbReference type="Rhea" id="RHEA-COMP:10232"/>
        <dbReference type="Rhea" id="RHEA-COMP:10233"/>
        <dbReference type="ChEBI" id="CHEBI:15378"/>
        <dbReference type="ChEBI" id="CHEBI:57856"/>
        <dbReference type="ChEBI" id="CHEBI:59789"/>
        <dbReference type="ChEBI" id="CHEBI:74411"/>
        <dbReference type="ChEBI" id="CHEBI:74493"/>
        <dbReference type="EC" id="2.1.1.182"/>
    </reaction>
</comment>
<comment type="subcellular location">
    <subcellularLocation>
        <location evidence="1">Cytoplasm</location>
    </subcellularLocation>
</comment>
<comment type="similarity">
    <text evidence="1">Belongs to the class I-like SAM-binding methyltransferase superfamily. rRNA adenine N(6)-methyltransferase family. RsmA subfamily.</text>
</comment>
<gene>
    <name evidence="1" type="primary">rsmA</name>
    <name evidence="1" type="synonym">ksgA</name>
    <name type="ordered locus">EF_0936</name>
</gene>
<evidence type="ECO:0000255" key="1">
    <source>
        <dbReference type="HAMAP-Rule" id="MF_00607"/>
    </source>
</evidence>
<dbReference type="EC" id="2.1.1.182" evidence="1"/>
<dbReference type="EMBL" id="AE016830">
    <property type="protein sequence ID" value="AAO80744.1"/>
    <property type="molecule type" value="Genomic_DNA"/>
</dbReference>
<dbReference type="RefSeq" id="NP_814674.1">
    <property type="nucleotide sequence ID" value="NC_004668.1"/>
</dbReference>
<dbReference type="RefSeq" id="WP_002358849.1">
    <property type="nucleotide sequence ID" value="NZ_KE136527.1"/>
</dbReference>
<dbReference type="SMR" id="Q837A7"/>
<dbReference type="STRING" id="226185.EF_0936"/>
<dbReference type="EnsemblBacteria" id="AAO80744">
    <property type="protein sequence ID" value="AAO80744"/>
    <property type="gene ID" value="EF_0936"/>
</dbReference>
<dbReference type="GeneID" id="60893272"/>
<dbReference type="KEGG" id="efa:EF0936"/>
<dbReference type="PATRIC" id="fig|226185.45.peg.3144"/>
<dbReference type="eggNOG" id="COG0030">
    <property type="taxonomic scope" value="Bacteria"/>
</dbReference>
<dbReference type="HOGENOM" id="CLU_041220_0_0_9"/>
<dbReference type="Proteomes" id="UP000001415">
    <property type="component" value="Chromosome"/>
</dbReference>
<dbReference type="GO" id="GO:0005829">
    <property type="term" value="C:cytosol"/>
    <property type="evidence" value="ECO:0007669"/>
    <property type="project" value="TreeGrafter"/>
</dbReference>
<dbReference type="GO" id="GO:0052908">
    <property type="term" value="F:16S rRNA (adenine(1518)-N(6)/adenine(1519)-N(6))-dimethyltransferase activity"/>
    <property type="evidence" value="ECO:0007669"/>
    <property type="project" value="UniProtKB-EC"/>
</dbReference>
<dbReference type="GO" id="GO:0003723">
    <property type="term" value="F:RNA binding"/>
    <property type="evidence" value="ECO:0007669"/>
    <property type="project" value="UniProtKB-KW"/>
</dbReference>
<dbReference type="CDD" id="cd02440">
    <property type="entry name" value="AdoMet_MTases"/>
    <property type="match status" value="1"/>
</dbReference>
<dbReference type="FunFam" id="3.40.50.150:FF:000023">
    <property type="entry name" value="Ribosomal RNA small subunit methyltransferase A"/>
    <property type="match status" value="1"/>
</dbReference>
<dbReference type="Gene3D" id="1.10.8.100">
    <property type="entry name" value="Ribosomal RNA adenine dimethylase-like, domain 2"/>
    <property type="match status" value="1"/>
</dbReference>
<dbReference type="Gene3D" id="3.40.50.150">
    <property type="entry name" value="Vaccinia Virus protein VP39"/>
    <property type="match status" value="1"/>
</dbReference>
<dbReference type="HAMAP" id="MF_00607">
    <property type="entry name" value="16SrRNA_methyltr_A"/>
    <property type="match status" value="1"/>
</dbReference>
<dbReference type="InterPro" id="IPR001737">
    <property type="entry name" value="KsgA/Erm"/>
</dbReference>
<dbReference type="InterPro" id="IPR023165">
    <property type="entry name" value="rRNA_Ade_diMease-like_C"/>
</dbReference>
<dbReference type="InterPro" id="IPR020596">
    <property type="entry name" value="rRNA_Ade_Mease_Trfase_CS"/>
</dbReference>
<dbReference type="InterPro" id="IPR020598">
    <property type="entry name" value="rRNA_Ade_methylase_Trfase_N"/>
</dbReference>
<dbReference type="InterPro" id="IPR011530">
    <property type="entry name" value="rRNA_adenine_dimethylase"/>
</dbReference>
<dbReference type="InterPro" id="IPR029063">
    <property type="entry name" value="SAM-dependent_MTases_sf"/>
</dbReference>
<dbReference type="NCBIfam" id="TIGR00755">
    <property type="entry name" value="ksgA"/>
    <property type="match status" value="1"/>
</dbReference>
<dbReference type="PANTHER" id="PTHR11727">
    <property type="entry name" value="DIMETHYLADENOSINE TRANSFERASE"/>
    <property type="match status" value="1"/>
</dbReference>
<dbReference type="PANTHER" id="PTHR11727:SF7">
    <property type="entry name" value="DIMETHYLADENOSINE TRANSFERASE-RELATED"/>
    <property type="match status" value="1"/>
</dbReference>
<dbReference type="Pfam" id="PF00398">
    <property type="entry name" value="RrnaAD"/>
    <property type="match status" value="1"/>
</dbReference>
<dbReference type="SMART" id="SM00650">
    <property type="entry name" value="rADc"/>
    <property type="match status" value="1"/>
</dbReference>
<dbReference type="SUPFAM" id="SSF53335">
    <property type="entry name" value="S-adenosyl-L-methionine-dependent methyltransferases"/>
    <property type="match status" value="1"/>
</dbReference>
<dbReference type="PROSITE" id="PS01131">
    <property type="entry name" value="RRNA_A_DIMETH"/>
    <property type="match status" value="1"/>
</dbReference>
<dbReference type="PROSITE" id="PS51689">
    <property type="entry name" value="SAM_RNA_A_N6_MT"/>
    <property type="match status" value="1"/>
</dbReference>
<protein>
    <recommendedName>
        <fullName evidence="1">Ribosomal RNA small subunit methyltransferase A</fullName>
        <ecNumber evidence="1">2.1.1.182</ecNumber>
    </recommendedName>
    <alternativeName>
        <fullName evidence="1">16S rRNA (adenine(1518)-N(6)/adenine(1519)-N(6))-dimethyltransferase</fullName>
    </alternativeName>
    <alternativeName>
        <fullName evidence="1">16S rRNA dimethyladenosine transferase</fullName>
    </alternativeName>
    <alternativeName>
        <fullName evidence="1">16S rRNA dimethylase</fullName>
    </alternativeName>
    <alternativeName>
        <fullName evidence="1">S-adenosylmethionine-6-N', N'-adenosyl(rRNA) dimethyltransferase</fullName>
    </alternativeName>
</protein>
<name>RSMA_ENTFA</name>
<keyword id="KW-0963">Cytoplasm</keyword>
<keyword id="KW-0489">Methyltransferase</keyword>
<keyword id="KW-1185">Reference proteome</keyword>
<keyword id="KW-0694">RNA-binding</keyword>
<keyword id="KW-0698">rRNA processing</keyword>
<keyword id="KW-0949">S-adenosyl-L-methionine</keyword>
<keyword id="KW-0808">Transferase</keyword>
<sequence length="295" mass="33113">MTDYKEIATPSRTKEILKKHGFSFKKSLGQNFLTEPNILRKIVETAGINQQTNVVEVGPGIGALTEQLAMNAAQVVAFEIDDRLIPVLADTLSRYDNVTVVHQDVLKADLVETTNQVFQEKYPIKVVANLPYYITTPIMMHFLESSLDVAEMVVMMQKEVADRIAAKPGTKAYGSLSIAVQYFMEASVAFIVPKTVFVPQPNVDSAIIKLTRRATPAVTVTNEKEFFKLTKASFQLRRKTLWNNLTHFYGKDEQTVAWLKESLAEAEIDPSRRGETLSLEEFARLSNALEKNKPV</sequence>
<organism>
    <name type="scientific">Enterococcus faecalis (strain ATCC 700802 / V583)</name>
    <dbReference type="NCBI Taxonomy" id="226185"/>
    <lineage>
        <taxon>Bacteria</taxon>
        <taxon>Bacillati</taxon>
        <taxon>Bacillota</taxon>
        <taxon>Bacilli</taxon>
        <taxon>Lactobacillales</taxon>
        <taxon>Enterococcaceae</taxon>
        <taxon>Enterococcus</taxon>
    </lineage>
</organism>
<feature type="chain" id="PRO_0000101529" description="Ribosomal RNA small subunit methyltransferase A">
    <location>
        <begin position="1"/>
        <end position="295"/>
    </location>
</feature>
<feature type="binding site" evidence="1">
    <location>
        <position position="31"/>
    </location>
    <ligand>
        <name>S-adenosyl-L-methionine</name>
        <dbReference type="ChEBI" id="CHEBI:59789"/>
    </ligand>
</feature>
<feature type="binding site" evidence="1">
    <location>
        <position position="33"/>
    </location>
    <ligand>
        <name>S-adenosyl-L-methionine</name>
        <dbReference type="ChEBI" id="CHEBI:59789"/>
    </ligand>
</feature>
<feature type="binding site" evidence="1">
    <location>
        <position position="58"/>
    </location>
    <ligand>
        <name>S-adenosyl-L-methionine</name>
        <dbReference type="ChEBI" id="CHEBI:59789"/>
    </ligand>
</feature>
<feature type="binding site" evidence="1">
    <location>
        <position position="79"/>
    </location>
    <ligand>
        <name>S-adenosyl-L-methionine</name>
        <dbReference type="ChEBI" id="CHEBI:59789"/>
    </ligand>
</feature>
<feature type="binding site" evidence="1">
    <location>
        <position position="104"/>
    </location>
    <ligand>
        <name>S-adenosyl-L-methionine</name>
        <dbReference type="ChEBI" id="CHEBI:59789"/>
    </ligand>
</feature>
<feature type="binding site" evidence="1">
    <location>
        <position position="129"/>
    </location>
    <ligand>
        <name>S-adenosyl-L-methionine</name>
        <dbReference type="ChEBI" id="CHEBI:59789"/>
    </ligand>
</feature>